<name>ATPA_BRASO</name>
<evidence type="ECO:0000250" key="1"/>
<evidence type="ECO:0000255" key="2">
    <source>
        <dbReference type="HAMAP-Rule" id="MF_01346"/>
    </source>
</evidence>
<gene>
    <name evidence="2" type="primary">atpA</name>
    <name type="ordered locus">BRADO0417</name>
</gene>
<organism>
    <name type="scientific">Bradyrhizobium sp. (strain ORS 278)</name>
    <dbReference type="NCBI Taxonomy" id="114615"/>
    <lineage>
        <taxon>Bacteria</taxon>
        <taxon>Pseudomonadati</taxon>
        <taxon>Pseudomonadota</taxon>
        <taxon>Alphaproteobacteria</taxon>
        <taxon>Hyphomicrobiales</taxon>
        <taxon>Nitrobacteraceae</taxon>
        <taxon>Bradyrhizobium</taxon>
    </lineage>
</organism>
<keyword id="KW-0066">ATP synthesis</keyword>
<keyword id="KW-0067">ATP-binding</keyword>
<keyword id="KW-0997">Cell inner membrane</keyword>
<keyword id="KW-1003">Cell membrane</keyword>
<keyword id="KW-0139">CF(1)</keyword>
<keyword id="KW-0375">Hydrogen ion transport</keyword>
<keyword id="KW-0406">Ion transport</keyword>
<keyword id="KW-0472">Membrane</keyword>
<keyword id="KW-0547">Nucleotide-binding</keyword>
<keyword id="KW-1185">Reference proteome</keyword>
<keyword id="KW-1278">Translocase</keyword>
<keyword id="KW-0813">Transport</keyword>
<accession>A4YKD8</accession>
<protein>
    <recommendedName>
        <fullName evidence="2">ATP synthase subunit alpha</fullName>
        <ecNumber evidence="2">7.1.2.2</ecNumber>
    </recommendedName>
    <alternativeName>
        <fullName evidence="2">ATP synthase F1 sector subunit alpha</fullName>
    </alternativeName>
    <alternativeName>
        <fullName evidence="2">F-ATPase subunit alpha</fullName>
    </alternativeName>
</protein>
<dbReference type="EC" id="7.1.2.2" evidence="2"/>
<dbReference type="EMBL" id="CU234118">
    <property type="protein sequence ID" value="CAL74364.1"/>
    <property type="molecule type" value="Genomic_DNA"/>
</dbReference>
<dbReference type="RefSeq" id="WP_008961301.1">
    <property type="nucleotide sequence ID" value="NC_009445.1"/>
</dbReference>
<dbReference type="SMR" id="A4YKD8"/>
<dbReference type="STRING" id="114615.BRADO0417"/>
<dbReference type="KEGG" id="bra:BRADO0417"/>
<dbReference type="eggNOG" id="COG0056">
    <property type="taxonomic scope" value="Bacteria"/>
</dbReference>
<dbReference type="HOGENOM" id="CLU_010091_2_1_5"/>
<dbReference type="OrthoDB" id="9803053at2"/>
<dbReference type="Proteomes" id="UP000001994">
    <property type="component" value="Chromosome"/>
</dbReference>
<dbReference type="GO" id="GO:0005886">
    <property type="term" value="C:plasma membrane"/>
    <property type="evidence" value="ECO:0007669"/>
    <property type="project" value="UniProtKB-SubCell"/>
</dbReference>
<dbReference type="GO" id="GO:0045259">
    <property type="term" value="C:proton-transporting ATP synthase complex"/>
    <property type="evidence" value="ECO:0007669"/>
    <property type="project" value="UniProtKB-KW"/>
</dbReference>
<dbReference type="GO" id="GO:0043531">
    <property type="term" value="F:ADP binding"/>
    <property type="evidence" value="ECO:0007669"/>
    <property type="project" value="TreeGrafter"/>
</dbReference>
<dbReference type="GO" id="GO:0005524">
    <property type="term" value="F:ATP binding"/>
    <property type="evidence" value="ECO:0007669"/>
    <property type="project" value="UniProtKB-UniRule"/>
</dbReference>
<dbReference type="GO" id="GO:0046933">
    <property type="term" value="F:proton-transporting ATP synthase activity, rotational mechanism"/>
    <property type="evidence" value="ECO:0007669"/>
    <property type="project" value="UniProtKB-UniRule"/>
</dbReference>
<dbReference type="CDD" id="cd18113">
    <property type="entry name" value="ATP-synt_F1_alpha_C"/>
    <property type="match status" value="1"/>
</dbReference>
<dbReference type="CDD" id="cd18116">
    <property type="entry name" value="ATP-synt_F1_alpha_N"/>
    <property type="match status" value="1"/>
</dbReference>
<dbReference type="CDD" id="cd01132">
    <property type="entry name" value="F1-ATPase_alpha_CD"/>
    <property type="match status" value="1"/>
</dbReference>
<dbReference type="FunFam" id="1.20.150.20:FF:000001">
    <property type="entry name" value="ATP synthase subunit alpha"/>
    <property type="match status" value="1"/>
</dbReference>
<dbReference type="FunFam" id="2.40.30.20:FF:000001">
    <property type="entry name" value="ATP synthase subunit alpha"/>
    <property type="match status" value="1"/>
</dbReference>
<dbReference type="FunFam" id="3.40.50.300:FF:002432">
    <property type="entry name" value="ATP synthase subunit alpha, mitochondrial"/>
    <property type="match status" value="1"/>
</dbReference>
<dbReference type="Gene3D" id="2.40.30.20">
    <property type="match status" value="1"/>
</dbReference>
<dbReference type="Gene3D" id="1.20.150.20">
    <property type="entry name" value="ATP synthase alpha/beta chain, C-terminal domain"/>
    <property type="match status" value="1"/>
</dbReference>
<dbReference type="Gene3D" id="3.40.50.300">
    <property type="entry name" value="P-loop containing nucleotide triphosphate hydrolases"/>
    <property type="match status" value="1"/>
</dbReference>
<dbReference type="HAMAP" id="MF_01346">
    <property type="entry name" value="ATP_synth_alpha_bact"/>
    <property type="match status" value="1"/>
</dbReference>
<dbReference type="InterPro" id="IPR023366">
    <property type="entry name" value="ATP_synth_asu-like_sf"/>
</dbReference>
<dbReference type="InterPro" id="IPR000793">
    <property type="entry name" value="ATP_synth_asu_C"/>
</dbReference>
<dbReference type="InterPro" id="IPR038376">
    <property type="entry name" value="ATP_synth_asu_C_sf"/>
</dbReference>
<dbReference type="InterPro" id="IPR033732">
    <property type="entry name" value="ATP_synth_F1_a_nt-bd_dom"/>
</dbReference>
<dbReference type="InterPro" id="IPR005294">
    <property type="entry name" value="ATP_synth_F1_asu"/>
</dbReference>
<dbReference type="InterPro" id="IPR020003">
    <property type="entry name" value="ATPase_a/bsu_AS"/>
</dbReference>
<dbReference type="InterPro" id="IPR004100">
    <property type="entry name" value="ATPase_F1/V1/A1_a/bsu_N"/>
</dbReference>
<dbReference type="InterPro" id="IPR036121">
    <property type="entry name" value="ATPase_F1/V1/A1_a/bsu_N_sf"/>
</dbReference>
<dbReference type="InterPro" id="IPR000194">
    <property type="entry name" value="ATPase_F1/V1/A1_a/bsu_nucl-bd"/>
</dbReference>
<dbReference type="InterPro" id="IPR027417">
    <property type="entry name" value="P-loop_NTPase"/>
</dbReference>
<dbReference type="NCBIfam" id="TIGR00962">
    <property type="entry name" value="atpA"/>
    <property type="match status" value="1"/>
</dbReference>
<dbReference type="NCBIfam" id="NF009884">
    <property type="entry name" value="PRK13343.1"/>
    <property type="match status" value="1"/>
</dbReference>
<dbReference type="PANTHER" id="PTHR48082">
    <property type="entry name" value="ATP SYNTHASE SUBUNIT ALPHA, MITOCHONDRIAL"/>
    <property type="match status" value="1"/>
</dbReference>
<dbReference type="PANTHER" id="PTHR48082:SF2">
    <property type="entry name" value="ATP SYNTHASE SUBUNIT ALPHA, MITOCHONDRIAL"/>
    <property type="match status" value="1"/>
</dbReference>
<dbReference type="Pfam" id="PF00006">
    <property type="entry name" value="ATP-synt_ab"/>
    <property type="match status" value="1"/>
</dbReference>
<dbReference type="Pfam" id="PF00306">
    <property type="entry name" value="ATP-synt_ab_C"/>
    <property type="match status" value="1"/>
</dbReference>
<dbReference type="Pfam" id="PF02874">
    <property type="entry name" value="ATP-synt_ab_N"/>
    <property type="match status" value="1"/>
</dbReference>
<dbReference type="PIRSF" id="PIRSF039088">
    <property type="entry name" value="F_ATPase_subunit_alpha"/>
    <property type="match status" value="1"/>
</dbReference>
<dbReference type="SUPFAM" id="SSF47917">
    <property type="entry name" value="C-terminal domain of alpha and beta subunits of F1 ATP synthase"/>
    <property type="match status" value="1"/>
</dbReference>
<dbReference type="SUPFAM" id="SSF50615">
    <property type="entry name" value="N-terminal domain of alpha and beta subunits of F1 ATP synthase"/>
    <property type="match status" value="1"/>
</dbReference>
<dbReference type="SUPFAM" id="SSF52540">
    <property type="entry name" value="P-loop containing nucleoside triphosphate hydrolases"/>
    <property type="match status" value="1"/>
</dbReference>
<dbReference type="PROSITE" id="PS00152">
    <property type="entry name" value="ATPASE_ALPHA_BETA"/>
    <property type="match status" value="1"/>
</dbReference>
<comment type="function">
    <text evidence="2">Produces ATP from ADP in the presence of a proton gradient across the membrane. The alpha chain is a regulatory subunit.</text>
</comment>
<comment type="catalytic activity">
    <reaction evidence="2">
        <text>ATP + H2O + 4 H(+)(in) = ADP + phosphate + 5 H(+)(out)</text>
        <dbReference type="Rhea" id="RHEA:57720"/>
        <dbReference type="ChEBI" id="CHEBI:15377"/>
        <dbReference type="ChEBI" id="CHEBI:15378"/>
        <dbReference type="ChEBI" id="CHEBI:30616"/>
        <dbReference type="ChEBI" id="CHEBI:43474"/>
        <dbReference type="ChEBI" id="CHEBI:456216"/>
        <dbReference type="EC" id="7.1.2.2"/>
    </reaction>
</comment>
<comment type="subunit">
    <text evidence="1">F-type ATPases have 2 components, CF(1) - the catalytic core - and CF(0) - the membrane proton channel. CF(1) has five subunits: alpha(3), beta(3), gamma(1), delta(1), epsilon(1). CF(0) has four main subunits: a(1), b(1), b'(1) and c(9-12) (By similarity).</text>
</comment>
<comment type="subcellular location">
    <subcellularLocation>
        <location evidence="2">Cell inner membrane</location>
        <topology evidence="2">Peripheral membrane protein</topology>
    </subcellularLocation>
</comment>
<comment type="similarity">
    <text evidence="2">Belongs to the ATPase alpha/beta chains family.</text>
</comment>
<feature type="chain" id="PRO_0000302631" description="ATP synthase subunit alpha">
    <location>
        <begin position="1"/>
        <end position="509"/>
    </location>
</feature>
<feature type="binding site" evidence="2">
    <location>
        <begin position="169"/>
        <end position="176"/>
    </location>
    <ligand>
        <name>ATP</name>
        <dbReference type="ChEBI" id="CHEBI:30616"/>
    </ligand>
</feature>
<feature type="site" description="Required for activity" evidence="2">
    <location>
        <position position="370"/>
    </location>
</feature>
<proteinExistence type="inferred from homology"/>
<reference key="1">
    <citation type="journal article" date="2007" name="Science">
        <title>Legumes symbioses: absence of nod genes in photosynthetic bradyrhizobia.</title>
        <authorList>
            <person name="Giraud E."/>
            <person name="Moulin L."/>
            <person name="Vallenet D."/>
            <person name="Barbe V."/>
            <person name="Cytryn E."/>
            <person name="Avarre J.-C."/>
            <person name="Jaubert M."/>
            <person name="Simon D."/>
            <person name="Cartieaux F."/>
            <person name="Prin Y."/>
            <person name="Bena G."/>
            <person name="Hannibal L."/>
            <person name="Fardoux J."/>
            <person name="Kojadinovic M."/>
            <person name="Vuillet L."/>
            <person name="Lajus A."/>
            <person name="Cruveiller S."/>
            <person name="Rouy Z."/>
            <person name="Mangenot S."/>
            <person name="Segurens B."/>
            <person name="Dossat C."/>
            <person name="Franck W.L."/>
            <person name="Chang W.-S."/>
            <person name="Saunders E."/>
            <person name="Bruce D."/>
            <person name="Richardson P."/>
            <person name="Normand P."/>
            <person name="Dreyfus B."/>
            <person name="Pignol D."/>
            <person name="Stacey G."/>
            <person name="Emerich D."/>
            <person name="Vermeglio A."/>
            <person name="Medigue C."/>
            <person name="Sadowsky M."/>
        </authorList>
    </citation>
    <scope>NUCLEOTIDE SEQUENCE [LARGE SCALE GENOMIC DNA]</scope>
    <source>
        <strain>ORS 278</strain>
    </source>
</reference>
<sequence length="509" mass="55195">MDIRAAEISAILKDQIKNFGQEAEVTEVGQVLSVGDGIARVYGLDNVQAGEMVEFENGTRGMALNLETDNVGVVIFGADREIKEGQTVKRTRAIVDAPVGKGLLGRVVDALGNPIDGKGPIQFTERKRVDVKAPGIIPRKSVNEPMATGLKAIDALIPIGRGQRELIIGDRQTGKTAIALDTILNQKPLNAQPDEKIKLYCVYVAVGQKRSTVAQFVKVLEEQGALEYSIVVAATASDPAPMQYLAPFTGCTMGEYFRDNGMHAVIIYDDLSKQAVAYRQMSLLLRRPPGREAYPGDVFYLHSRLLERAAKLNETQGAGSLTALPVIETQANDVSAYIPTNVISITDGQIFLETDLFFQGIRPAVNVGLSVSRVGSSAQTKAMKKVAGKIKGELAQYREMAAFAQFGSDLDAATQRLLNRGSRLTELLKQPQFSPLKMEEQVCVIWAGTNGFLDGLPLNKVRAFEDGLLSLLRGKHADLLNTIRDTRDLSDDSAAKLKAAVEGFAKTFS</sequence>